<keyword id="KW-0167">Capsid protein</keyword>
<keyword id="KW-1139">Helical capsid protein</keyword>
<keyword id="KW-1035">Host cytoplasm</keyword>
<keyword id="KW-0945">Host-virus interaction</keyword>
<keyword id="KW-0378">Hydrolase</keyword>
<keyword id="KW-1224">Inhibition of host IKBKE by virus</keyword>
<keyword id="KW-1090">Inhibition of host innate immune response by virus</keyword>
<keyword id="KW-1113">Inhibition of host RLR pathway by virus</keyword>
<keyword id="KW-0922">Interferon antiviral system evasion</keyword>
<keyword id="KW-0464">Manganese</keyword>
<keyword id="KW-0479">Metal-binding</keyword>
<keyword id="KW-1185">Reference proteome</keyword>
<keyword id="KW-0687">Ribonucleoprotein</keyword>
<keyword id="KW-0694">RNA-binding</keyword>
<keyword id="KW-0899">Viral immunoevasion</keyword>
<keyword id="KW-0543">Viral nucleoprotein</keyword>
<keyword id="KW-0946">Virion</keyword>
<keyword id="KW-0862">Zinc</keyword>
<proteinExistence type="inferred from homology"/>
<name>NCAP_PIRVV</name>
<evidence type="ECO:0000255" key="1">
    <source>
        <dbReference type="HAMAP-Rule" id="MF_04085"/>
    </source>
</evidence>
<evidence type="ECO:0000256" key="2">
    <source>
        <dbReference type="SAM" id="MobiDB-lite"/>
    </source>
</evidence>
<accession>Q8BDE4</accession>
<reference key="1">
    <citation type="journal article" date="2002" name="Virology">
        <title>High genetic divergence and recombination in Arenaviruses from the Americas.</title>
        <authorList>
            <person name="Archer A.M."/>
            <person name="Rico-Hesse R."/>
        </authorList>
    </citation>
    <scope>NUCLEOTIDE SEQUENCE [GENOMIC RNA]</scope>
</reference>
<sequence length="560" mass="62269">MASDNVASFRWTQALRRGLSNWTNPVKSDVITDTRALLAALDFDRVAQVQRLMRKDKRTDTDLTKLRDLNKEVDALMNMRTTQKDNVLRVGGLSKDELMELASDLQKLKKKVLRVEGSGQPGVYAGNLTTTQLEQRSKILRDMGFAQLRGNPSGVVKVWDIKDSSLLINQFGSMPAVTMACMTEQGGESLNDVVQGLSALGLLYTVKYPNMSDLEKLADQYPCLGYITQEQSQINVSGYNLSLSAAVKAGACMLDGGNMLETIQVKPTMFSSMIKAVLEVKSKERMFVSEAPGQRNPYENLLYKLCLSGDGWPYIGSRSQVKGRAWDNTTVDLTDTGSPNHPPVRNGGSPRLSQLSHAKEEQILEGLKRLDSKATTWIDIEGTPNDPVELAIFQPESGNYIHCYREPHDVKSFKDQSKYSHGMLLKDLTNTQPGLISFIIKNLPAGIVLTAQGSDDIEKLLEMHARRDISIIDVRLTSEQARQFEDKVWDKFGILCNKHKGIVLARKKKGSPPGSKNPHCALLDCIMFCSTIGGFVDDKKPTRLLPLDLLYREQASLIEL</sequence>
<protein>
    <recommendedName>
        <fullName evidence="1">Nucleoprotein</fullName>
        <ecNumber evidence="1">3.1.13.-</ecNumber>
    </recommendedName>
    <alternativeName>
        <fullName evidence="1">Nucleocapsid protein</fullName>
    </alternativeName>
    <alternativeName>
        <fullName evidence="1">Protein N</fullName>
    </alternativeName>
</protein>
<dbReference type="EC" id="3.1.13.-" evidence="1"/>
<dbReference type="EMBL" id="AF485262">
    <property type="protein sequence ID" value="AAN09947.1"/>
    <property type="molecule type" value="Genomic_RNA"/>
</dbReference>
<dbReference type="SMR" id="Q8BDE4"/>
<dbReference type="KEGG" id="vg:2845917"/>
<dbReference type="OrthoDB" id="3135at10239"/>
<dbReference type="Proteomes" id="UP000009266">
    <property type="component" value="Genome"/>
</dbReference>
<dbReference type="GO" id="GO:0019029">
    <property type="term" value="C:helical viral capsid"/>
    <property type="evidence" value="ECO:0007669"/>
    <property type="project" value="UniProtKB-UniRule"/>
</dbReference>
<dbReference type="GO" id="GO:0030430">
    <property type="term" value="C:host cell cytoplasm"/>
    <property type="evidence" value="ECO:0007669"/>
    <property type="project" value="UniProtKB-SubCell"/>
</dbReference>
<dbReference type="GO" id="GO:1990904">
    <property type="term" value="C:ribonucleoprotein complex"/>
    <property type="evidence" value="ECO:0007669"/>
    <property type="project" value="UniProtKB-KW"/>
</dbReference>
<dbReference type="GO" id="GO:0019013">
    <property type="term" value="C:viral nucleocapsid"/>
    <property type="evidence" value="ECO:0007669"/>
    <property type="project" value="UniProtKB-UniRule"/>
</dbReference>
<dbReference type="GO" id="GO:0016787">
    <property type="term" value="F:hydrolase activity"/>
    <property type="evidence" value="ECO:0007669"/>
    <property type="project" value="UniProtKB-KW"/>
</dbReference>
<dbReference type="GO" id="GO:0046872">
    <property type="term" value="F:metal ion binding"/>
    <property type="evidence" value="ECO:0007669"/>
    <property type="project" value="UniProtKB-UniRule"/>
</dbReference>
<dbReference type="GO" id="GO:0003723">
    <property type="term" value="F:RNA binding"/>
    <property type="evidence" value="ECO:0007669"/>
    <property type="project" value="UniProtKB-UniRule"/>
</dbReference>
<dbReference type="GO" id="GO:0039689">
    <property type="term" value="P:negative stranded viral RNA replication"/>
    <property type="evidence" value="ECO:0000250"/>
    <property type="project" value="UniProtKB"/>
</dbReference>
<dbReference type="GO" id="GO:0039696">
    <property type="term" value="P:RNA-templated viral transcription"/>
    <property type="evidence" value="ECO:0000250"/>
    <property type="project" value="UniProtKB"/>
</dbReference>
<dbReference type="GO" id="GO:0039724">
    <property type="term" value="P:symbiont-mediated suppression of host cytoplasmic pattern recognition receptor signaling pathway via inhibition of IKBKE activity"/>
    <property type="evidence" value="ECO:0007669"/>
    <property type="project" value="UniProtKB-UniRule"/>
</dbReference>
<dbReference type="FunFam" id="1.10.150.550:FF:000001">
    <property type="entry name" value="Nucleoprotein"/>
    <property type="match status" value="1"/>
</dbReference>
<dbReference type="FunFam" id="1.10.150.550:FF:000002">
    <property type="entry name" value="Nucleoprotein"/>
    <property type="match status" value="1"/>
</dbReference>
<dbReference type="FunFam" id="3.30.420.410:FF:000001">
    <property type="entry name" value="Nucleoprotein"/>
    <property type="match status" value="1"/>
</dbReference>
<dbReference type="Gene3D" id="3.30.420.410">
    <property type="entry name" value="Arenaviral nucleoprotein, C-terminal domain"/>
    <property type="match status" value="1"/>
</dbReference>
<dbReference type="Gene3D" id="1.10.150.550">
    <property type="entry name" value="Arenavirus nucleocapsid protein, head domain"/>
    <property type="match status" value="3"/>
</dbReference>
<dbReference type="HAMAP" id="MF_04085">
    <property type="entry name" value="ARENA_NCAP"/>
    <property type="match status" value="1"/>
</dbReference>
<dbReference type="InterPro" id="IPR000229">
    <property type="entry name" value="Nucleocapsid_arenaviridae"/>
</dbReference>
<dbReference type="InterPro" id="IPR035084">
    <property type="entry name" value="Nucleocapsid_C_arenaviridae"/>
</dbReference>
<dbReference type="InterPro" id="IPR038115">
    <property type="entry name" value="Nucleocapsid_C_sf"/>
</dbReference>
<dbReference type="InterPro" id="IPR035083">
    <property type="entry name" value="Nucleocapsid_N_arenaviridae"/>
</dbReference>
<dbReference type="Pfam" id="PF17290">
    <property type="entry name" value="Arena_ncap_C"/>
    <property type="match status" value="1"/>
</dbReference>
<dbReference type="Pfam" id="PF00843">
    <property type="entry name" value="Arena_nucleocap"/>
    <property type="match status" value="1"/>
</dbReference>
<dbReference type="PIRSF" id="PIRSF004029">
    <property type="entry name" value="N_ArenaV"/>
    <property type="match status" value="1"/>
</dbReference>
<organism>
    <name type="scientific">Pirital mammarenavirus (isolate Rat/Venezuela/VAV-488/1995)</name>
    <name type="common">PIRV</name>
    <dbReference type="NCBI Taxonomy" id="3052324"/>
    <lineage>
        <taxon>Viruses</taxon>
        <taxon>Riboviria</taxon>
        <taxon>Orthornavirae</taxon>
        <taxon>Negarnaviricota</taxon>
        <taxon>Polyploviricotina</taxon>
        <taxon>Ellioviricetes</taxon>
        <taxon>Bunyavirales</taxon>
        <taxon>Arenaviridae</taxon>
        <taxon>Mammarenavirus</taxon>
    </lineage>
</organism>
<comment type="function">
    <text evidence="1">Encapsidates the genome, protecting it from nucleases. The encapsidated genomic RNA is termed the nucleocapsid (NC). Serves as template for viral transcription and replication. The increased presence of protein N in host cell does not seem to trigger the switch from transcription to replication as observed in other negative strain RNA viruses. Through the interaction with host IKBKE, strongly inhibits the phosphorylation and nuclear translocation of host IRF3, a protein involved in interferon activation pathway, leading to the inhibition of interferon-beta and IRF3-dependent promoters activation. Also encodes a functional 3'-5' exoribonuclease that degrades preferentially dsRNA substrates and thereby participates in the suppression of interferon induction.</text>
</comment>
<comment type="subunit">
    <text evidence="1">Homomultimerizes to form the nucleocapsid. Binds to viral genomic RNA. Interacts with glycoprotein G2. Interacts with protein Z; this interaction probably directs the encapsidated genome to budding sites. Interacts with protein L; this interaction does not interfere with Z-L interaction. Interacts with host IKBKE (via Protein kinase domain); the interaction inhibits IKBKE kinase activity.</text>
</comment>
<comment type="subcellular location">
    <subcellularLocation>
        <location evidence="1">Virion</location>
    </subcellularLocation>
    <subcellularLocation>
        <location evidence="1">Host cytoplasm</location>
    </subcellularLocation>
</comment>
<comment type="domain">
    <text evidence="1">The N-terminal region is important for the cap-binding activity while the C-terminal region contains the 3'-5' exoribonuclease activity. A CCHE zinc binding site is present in the C-terminal region and may thus contribute to the substrate binding and/or the specificity of the exonuclease activity.</text>
</comment>
<comment type="similarity">
    <text evidence="1">Belongs to the arenaviridae nucleocapsid protein family.</text>
</comment>
<organismHost>
    <name type="scientific">Sigmodon alstoni</name>
    <dbReference type="NCBI Taxonomy" id="134742"/>
</organismHost>
<gene>
    <name evidence="1" type="primary">N</name>
</gene>
<feature type="chain" id="PRO_0000361013" description="Nucleoprotein">
    <location>
        <begin position="1"/>
        <end position="560"/>
    </location>
</feature>
<feature type="region of interest" description="Binding site for the cap structure m7GTP" evidence="1">
    <location>
        <begin position="53"/>
        <end position="236"/>
    </location>
</feature>
<feature type="region of interest" description="Disordered" evidence="2">
    <location>
        <begin position="333"/>
        <end position="353"/>
    </location>
</feature>
<feature type="binding site" evidence="1">
    <location>
        <position position="379"/>
    </location>
    <ligand>
        <name>Mn(2+)</name>
        <dbReference type="ChEBI" id="CHEBI:29035"/>
    </ligand>
</feature>
<feature type="binding site" evidence="1">
    <location>
        <position position="381"/>
    </location>
    <ligand>
        <name>Mn(2+)</name>
        <dbReference type="ChEBI" id="CHEBI:29035"/>
    </ligand>
</feature>
<feature type="binding site" evidence="1">
    <location>
        <position position="389"/>
    </location>
    <ligand>
        <name>Zn(2+)</name>
        <dbReference type="ChEBI" id="CHEBI:29105"/>
    </ligand>
</feature>
<feature type="binding site" evidence="1">
    <location>
        <position position="496"/>
    </location>
    <ligand>
        <name>Zn(2+)</name>
        <dbReference type="ChEBI" id="CHEBI:29105"/>
    </ligand>
</feature>
<feature type="binding site" evidence="1">
    <location>
        <position position="499"/>
    </location>
    <ligand>
        <name>Zn(2+)</name>
        <dbReference type="ChEBI" id="CHEBI:29105"/>
    </ligand>
</feature>
<feature type="binding site" evidence="1">
    <location>
        <position position="520"/>
    </location>
    <ligand>
        <name>Zn(2+)</name>
        <dbReference type="ChEBI" id="CHEBI:29105"/>
    </ligand>
</feature>
<feature type="binding site" evidence="1">
    <location>
        <position position="524"/>
    </location>
    <ligand>
        <name>Mn(2+)</name>
        <dbReference type="ChEBI" id="CHEBI:29035"/>
    </ligand>
</feature>
<feature type="site" description="Important for exonuclease activity" evidence="1">
    <location>
        <position position="456"/>
    </location>
</feature>